<reference key="1">
    <citation type="journal article" date="2004" name="Nucleic Acids Res.">
        <title>Comparative analysis of the Borrelia garinii genome.</title>
        <authorList>
            <person name="Gloeckner G."/>
            <person name="Lehmann R."/>
            <person name="Romualdi A."/>
            <person name="Pradella S."/>
            <person name="Schulte-Spechtel U."/>
            <person name="Schilhabel M."/>
            <person name="Wilske B."/>
            <person name="Suehnel J."/>
            <person name="Platzer M."/>
        </authorList>
    </citation>
    <scope>NUCLEOTIDE SEQUENCE [LARGE SCALE GENOMIC DNA]</scope>
    <source>
        <strain>ATCC BAA-2496 / DSM 23469 / PBi</strain>
    </source>
</reference>
<accession>Q662L3</accession>
<sequence length="268" mass="30534">MRLIIRPTYEDISKWAANHVAQKIKEFSPTREKPFILGLPTGSSPIGMYKNLIKLYKDEKISFQNVITFNMDEYIGIEKNHPESYHSFMWKNFFSHIDIKKENINILNGNALNLKKECEEYEKKIKSFGGIMLFVGGIGPDGHIAFNEPGSSLTSRTRIKTLTQDTIIANSRFFEGNVNKVPKSALTVGVGTIMDSQEILIIVNGHNKARALKHAIEKGVNHMWTISALQLHKNTIIVSDKKATYELKIGTVEYFNDIERENFNNDLK</sequence>
<proteinExistence type="inferred from homology"/>
<organism>
    <name type="scientific">Borrelia garinii subsp. bavariensis (strain ATCC BAA-2496 / DSM 23469 / PBi)</name>
    <name type="common">Borreliella bavariensis</name>
    <dbReference type="NCBI Taxonomy" id="290434"/>
    <lineage>
        <taxon>Bacteria</taxon>
        <taxon>Pseudomonadati</taxon>
        <taxon>Spirochaetota</taxon>
        <taxon>Spirochaetia</taxon>
        <taxon>Spirochaetales</taxon>
        <taxon>Borreliaceae</taxon>
        <taxon>Borreliella</taxon>
    </lineage>
</organism>
<gene>
    <name evidence="1" type="primary">nagB</name>
    <name type="ordered locus">BG0150</name>
</gene>
<protein>
    <recommendedName>
        <fullName evidence="1">Glucosamine-6-phosphate deaminase</fullName>
        <ecNumber evidence="1">3.5.99.6</ecNumber>
    </recommendedName>
    <alternativeName>
        <fullName evidence="1">GlcN6P deaminase</fullName>
        <shortName evidence="1">GNPDA</shortName>
    </alternativeName>
    <alternativeName>
        <fullName evidence="1">Glucosamine-6-phosphate isomerase</fullName>
    </alternativeName>
</protein>
<name>NAGB_BORGP</name>
<dbReference type="EC" id="3.5.99.6" evidence="1"/>
<dbReference type="EMBL" id="CP000013">
    <property type="protein sequence ID" value="AAU07008.1"/>
    <property type="molecule type" value="Genomic_DNA"/>
</dbReference>
<dbReference type="RefSeq" id="WP_011193501.1">
    <property type="nucleotide sequence ID" value="NZ_CP028872.1"/>
</dbReference>
<dbReference type="SMR" id="Q662L3"/>
<dbReference type="GeneID" id="45160945"/>
<dbReference type="KEGG" id="bga:BG0150"/>
<dbReference type="eggNOG" id="COG0363">
    <property type="taxonomic scope" value="Bacteria"/>
</dbReference>
<dbReference type="HOGENOM" id="CLU_049611_0_1_12"/>
<dbReference type="OrthoDB" id="9791139at2"/>
<dbReference type="UniPathway" id="UPA00629">
    <property type="reaction ID" value="UER00684"/>
</dbReference>
<dbReference type="Proteomes" id="UP000002276">
    <property type="component" value="Chromosome"/>
</dbReference>
<dbReference type="GO" id="GO:0005737">
    <property type="term" value="C:cytoplasm"/>
    <property type="evidence" value="ECO:0007669"/>
    <property type="project" value="TreeGrafter"/>
</dbReference>
<dbReference type="GO" id="GO:0004342">
    <property type="term" value="F:glucosamine-6-phosphate deaminase activity"/>
    <property type="evidence" value="ECO:0007669"/>
    <property type="project" value="UniProtKB-UniRule"/>
</dbReference>
<dbReference type="GO" id="GO:0042802">
    <property type="term" value="F:identical protein binding"/>
    <property type="evidence" value="ECO:0007669"/>
    <property type="project" value="TreeGrafter"/>
</dbReference>
<dbReference type="GO" id="GO:0005975">
    <property type="term" value="P:carbohydrate metabolic process"/>
    <property type="evidence" value="ECO:0007669"/>
    <property type="project" value="InterPro"/>
</dbReference>
<dbReference type="GO" id="GO:0006043">
    <property type="term" value="P:glucosamine catabolic process"/>
    <property type="evidence" value="ECO:0007669"/>
    <property type="project" value="TreeGrafter"/>
</dbReference>
<dbReference type="GO" id="GO:0006046">
    <property type="term" value="P:N-acetylglucosamine catabolic process"/>
    <property type="evidence" value="ECO:0007669"/>
    <property type="project" value="TreeGrafter"/>
</dbReference>
<dbReference type="GO" id="GO:0019262">
    <property type="term" value="P:N-acetylneuraminate catabolic process"/>
    <property type="evidence" value="ECO:0007669"/>
    <property type="project" value="UniProtKB-UniRule"/>
</dbReference>
<dbReference type="CDD" id="cd01399">
    <property type="entry name" value="GlcN6P_deaminase"/>
    <property type="match status" value="1"/>
</dbReference>
<dbReference type="FunFam" id="3.40.50.1360:FF:000002">
    <property type="entry name" value="Glucosamine-6-phosphate deaminase"/>
    <property type="match status" value="1"/>
</dbReference>
<dbReference type="Gene3D" id="3.40.50.1360">
    <property type="match status" value="1"/>
</dbReference>
<dbReference type="HAMAP" id="MF_01241">
    <property type="entry name" value="GlcN6P_deamin"/>
    <property type="match status" value="1"/>
</dbReference>
<dbReference type="InterPro" id="IPR006148">
    <property type="entry name" value="Glc/Gal-6P_isomerase"/>
</dbReference>
<dbReference type="InterPro" id="IPR004547">
    <property type="entry name" value="Glucosamine6P_isomerase"/>
</dbReference>
<dbReference type="InterPro" id="IPR018321">
    <property type="entry name" value="Glucosamine6P_isomerase_CS"/>
</dbReference>
<dbReference type="InterPro" id="IPR037171">
    <property type="entry name" value="NagB/RpiA_transferase-like"/>
</dbReference>
<dbReference type="NCBIfam" id="TIGR00502">
    <property type="entry name" value="nagB"/>
    <property type="match status" value="1"/>
</dbReference>
<dbReference type="PANTHER" id="PTHR11280">
    <property type="entry name" value="GLUCOSAMINE-6-PHOSPHATE ISOMERASE"/>
    <property type="match status" value="1"/>
</dbReference>
<dbReference type="PANTHER" id="PTHR11280:SF5">
    <property type="entry name" value="GLUCOSAMINE-6-PHOSPHATE ISOMERASE"/>
    <property type="match status" value="1"/>
</dbReference>
<dbReference type="Pfam" id="PF01182">
    <property type="entry name" value="Glucosamine_iso"/>
    <property type="match status" value="1"/>
</dbReference>
<dbReference type="SUPFAM" id="SSF100950">
    <property type="entry name" value="NagB/RpiA/CoA transferase-like"/>
    <property type="match status" value="1"/>
</dbReference>
<dbReference type="PROSITE" id="PS01161">
    <property type="entry name" value="GLC_GALNAC_ISOMERASE"/>
    <property type="match status" value="1"/>
</dbReference>
<evidence type="ECO:0000255" key="1">
    <source>
        <dbReference type="HAMAP-Rule" id="MF_01241"/>
    </source>
</evidence>
<comment type="function">
    <text evidence="1">Catalyzes the reversible isomerization-deamination of glucosamine 6-phosphate (GlcN6P) to form fructose 6-phosphate (Fru6P) and ammonium ion.</text>
</comment>
<comment type="catalytic activity">
    <reaction evidence="1">
        <text>alpha-D-glucosamine 6-phosphate + H2O = beta-D-fructose 6-phosphate + NH4(+)</text>
        <dbReference type="Rhea" id="RHEA:12172"/>
        <dbReference type="ChEBI" id="CHEBI:15377"/>
        <dbReference type="ChEBI" id="CHEBI:28938"/>
        <dbReference type="ChEBI" id="CHEBI:57634"/>
        <dbReference type="ChEBI" id="CHEBI:75989"/>
        <dbReference type="EC" id="3.5.99.6"/>
    </reaction>
</comment>
<comment type="activity regulation">
    <text evidence="1">Allosterically activated by N-acetylglucosamine 6-phosphate (GlcNAc6P).</text>
</comment>
<comment type="pathway">
    <text evidence="1">Amino-sugar metabolism; N-acetylneuraminate degradation; D-fructose 6-phosphate from N-acetylneuraminate: step 5/5.</text>
</comment>
<comment type="similarity">
    <text evidence="1">Belongs to the glucosamine/galactosamine-6-phosphate isomerase family. NagB subfamily.</text>
</comment>
<feature type="chain" id="PRO_1000066965" description="Glucosamine-6-phosphate deaminase">
    <location>
        <begin position="1"/>
        <end position="268"/>
    </location>
</feature>
<feature type="active site" description="Proton acceptor; for enolization step" evidence="1">
    <location>
        <position position="72"/>
    </location>
</feature>
<feature type="active site" description="For ring-opening step" evidence="1">
    <location>
        <position position="141"/>
    </location>
</feature>
<feature type="active site" description="Proton acceptor; for ring-opening step" evidence="1">
    <location>
        <position position="143"/>
    </location>
</feature>
<feature type="active site" description="For ring-opening step" evidence="1">
    <location>
        <position position="148"/>
    </location>
</feature>
<feature type="site" description="Part of the allosteric site" evidence="1">
    <location>
        <position position="151"/>
    </location>
</feature>
<feature type="site" description="Part of the allosteric site" evidence="1">
    <location>
        <position position="158"/>
    </location>
</feature>
<feature type="site" description="Part of the allosteric site" evidence="1">
    <location>
        <position position="160"/>
    </location>
</feature>
<feature type="site" description="Part of the allosteric site" evidence="1">
    <location>
        <position position="161"/>
    </location>
</feature>
<feature type="site" description="Part of the allosteric site" evidence="1">
    <location>
        <position position="254"/>
    </location>
</feature>
<keyword id="KW-0021">Allosteric enzyme</keyword>
<keyword id="KW-0119">Carbohydrate metabolism</keyword>
<keyword id="KW-0378">Hydrolase</keyword>